<proteinExistence type="evidence at protein level"/>
<sequence length="500" mass="55830">MIRFKKTKLIASIAMALCLFSQPVISFSKDITDKNQSIDSGISSLSYNRNEVLASNGDKIESFVPKEGKKTGNKFIVVERQKRSLTTSPVDISIIDSVNDRTYPGALQLADKAFVENRPTILMVKRKPININIDLPGLKGENSIKVDDPTYGKVSGAIDELVSKWNEKYSSTHTLPARTQYSESMVYSKSQISSALNVNAKVLENSLGVDFNAVANNEKKVMILAYKQIFYTVSADLPKNPSDLFDDSVTFNDLKQKGVSNEAPPLMVSNVAYGRTIYVKLETTSSSKDVQAAFKALIKNTDIKNSQQYKDIYENSSFTAVVLGGDAQEHNKVVTKDFDEIRKVIKDNATFSTKNPAYPISYTSVFLKDNSVAAVHNKTDYIETTSTEYSKGKINLDHSGAYVAQFEVAWDEVSYDKEGNEVLTHKTWDGNYQDKTAHYSTVIPLEANARNIRIKARECTGLAWEWWRDVISEYDVPLTNNINVSIWGTTLYPGSSITYN</sequence>
<protein>
    <recommendedName>
        <fullName>Perfringolysin O</fullName>
        <shortName>PFO</shortName>
    </recommendedName>
    <alternativeName>
        <fullName>Theta-toxin</fullName>
    </alternativeName>
    <alternativeName>
        <fullName>Thiol-activated cytolysin</fullName>
    </alternativeName>
</protein>
<gene>
    <name type="primary">pfo</name>
    <name type="synonym">pfoA</name>
    <name type="synonym">pfoR</name>
    <name type="ordered locus">CPE0163</name>
</gene>
<accession>P0C2E9</accession>
<accession>P19995</accession>
<evidence type="ECO:0000250" key="1">
    <source>
        <dbReference type="UniProtKB" id="Q04IN8"/>
    </source>
</evidence>
<evidence type="ECO:0000269" key="2">
    <source>
    </source>
</evidence>
<evidence type="ECO:0000269" key="3">
    <source>
    </source>
</evidence>
<evidence type="ECO:0000269" key="4">
    <source>
    </source>
</evidence>
<evidence type="ECO:0000269" key="5">
    <source>
    </source>
</evidence>
<evidence type="ECO:0000269" key="6">
    <source>
    </source>
</evidence>
<evidence type="ECO:0000305" key="7"/>
<evidence type="ECO:0000305" key="8">
    <source>
    </source>
</evidence>
<evidence type="ECO:0000305" key="9">
    <source>
    </source>
</evidence>
<evidence type="ECO:0007744" key="10">
    <source>
        <dbReference type="PDB" id="1M3I"/>
    </source>
</evidence>
<evidence type="ECO:0007744" key="11">
    <source>
        <dbReference type="PDB" id="1PFO"/>
    </source>
</evidence>
<evidence type="ECO:0007744" key="12">
    <source>
        <dbReference type="PDB" id="2BK1"/>
    </source>
</evidence>
<evidence type="ECO:0007744" key="13">
    <source>
        <dbReference type="PDB" id="2BK2"/>
    </source>
</evidence>
<evidence type="ECO:0007829" key="14">
    <source>
        <dbReference type="PDB" id="1M3I"/>
    </source>
</evidence>
<evidence type="ECO:0007829" key="15">
    <source>
        <dbReference type="PDB" id="1PFO"/>
    </source>
</evidence>
<evidence type="ECO:0007829" key="16">
    <source>
        <dbReference type="PDB" id="5DHL"/>
    </source>
</evidence>
<comment type="function">
    <text evidence="3 4">A cholesterol-dependent toxin that causes cytolysis by forming pores in cholesterol-containing host membranes. After binding to target membranes, the protein assembles into a pre-pore complex. A major conformational change leads to insertion in the host membrane and formation of an oligomeric pore complex. Cholesterol is required for binding to host cell membranes, membrane insertion and pore formation; cholesterol binding is mediated by a Thr-Leu pair in the C-terminus. Can be reversibly inactivated by oxidation.</text>
</comment>
<comment type="subunit">
    <text evidence="2">Modeling based on cryo-EM shows a homooligomeric pore complex containing 38-44 subunits; when inserted in the host membrane.</text>
</comment>
<comment type="subcellular location">
    <subcellularLocation>
        <location evidence="5">Secreted</location>
    </subcellularLocation>
    <subcellularLocation>
        <location>Host cell membrane</location>
        <topology evidence="8">Multi-pass membrane protein</topology>
    </subcellularLocation>
    <text evidence="8">Secreted as soluble protein that then inserts into the host cell membrane and forms huge pores formed by transmembrane beta-strands.</text>
</comment>
<comment type="domain">
    <text evidence="2 6">Mature protein has 3 discontinuous domains; D1, D2, D3 followed by C-terminal D4; the domains rearrange substantially upon membrane insertion (PubMed:15851031, PubMed:9182756). A highly conserved undecapeptide in the D4 domain has residues important for membrane binding and cell lysis, and penetrates into the upper leaflet of cholesterol-rich bilayers in the pre-pore complex (PubMed:15851031).</text>
</comment>
<comment type="similarity">
    <text evidence="7">Belongs to the cholesterol-dependent cytolysin family.</text>
</comment>
<dbReference type="EMBL" id="M81080">
    <property type="protein sequence ID" value="AAA23271.1"/>
    <property type="molecule type" value="Genomic_DNA"/>
</dbReference>
<dbReference type="EMBL" id="BA000016">
    <property type="protein sequence ID" value="BAB79869.1"/>
    <property type="molecule type" value="Genomic_DNA"/>
</dbReference>
<dbReference type="PIR" id="B43577">
    <property type="entry name" value="B43577"/>
</dbReference>
<dbReference type="RefSeq" id="WP_003467630.1">
    <property type="nucleotide sequence ID" value="NC_003366.1"/>
</dbReference>
<dbReference type="PDB" id="1M3I">
    <property type="method" value="X-ray"/>
    <property type="resolution" value="2.90 A"/>
    <property type="chains" value="A/B/C/D=30-500"/>
</dbReference>
<dbReference type="PDB" id="1M3J">
    <property type="method" value="X-ray"/>
    <property type="resolution" value="3.00 A"/>
    <property type="chains" value="A/B=30-500"/>
</dbReference>
<dbReference type="PDB" id="1PFO">
    <property type="method" value="X-ray"/>
    <property type="resolution" value="2.20 A"/>
    <property type="chains" value="A=1-500"/>
</dbReference>
<dbReference type="PDB" id="2BK1">
    <property type="method" value="EM"/>
    <property type="resolution" value="29.00 A"/>
    <property type="chains" value="A=53-500"/>
</dbReference>
<dbReference type="PDB" id="2BK2">
    <property type="method" value="EM"/>
    <property type="resolution" value="28.00 A"/>
    <property type="chains" value="A=36-500"/>
</dbReference>
<dbReference type="PDB" id="5DHL">
    <property type="method" value="X-ray"/>
    <property type="resolution" value="2.67 A"/>
    <property type="chains" value="A/B=29-500"/>
</dbReference>
<dbReference type="PDB" id="5DIM">
    <property type="method" value="X-ray"/>
    <property type="resolution" value="3.32 A"/>
    <property type="chains" value="A=29-500"/>
</dbReference>
<dbReference type="PDBsum" id="1M3I"/>
<dbReference type="PDBsum" id="1M3J"/>
<dbReference type="PDBsum" id="1PFO"/>
<dbReference type="PDBsum" id="2BK1"/>
<dbReference type="PDBsum" id="2BK2"/>
<dbReference type="PDBsum" id="5DHL"/>
<dbReference type="PDBsum" id="5DIM"/>
<dbReference type="SMR" id="P0C2E9"/>
<dbReference type="STRING" id="195102.gene:10489407"/>
<dbReference type="TCDB" id="1.C.12.1.1">
    <property type="family name" value="the thiol-activated cholesterol-dependent cytolysin (cdc) family"/>
</dbReference>
<dbReference type="ABCD" id="P0C2E9">
    <property type="antibodies" value="3 sequenced antibodies"/>
</dbReference>
<dbReference type="KEGG" id="cpe:CPE0163"/>
<dbReference type="HOGENOM" id="CLU_026912_1_0_9"/>
<dbReference type="EvolutionaryTrace" id="P0C2E9"/>
<dbReference type="Proteomes" id="UP000000818">
    <property type="component" value="Chromosome"/>
</dbReference>
<dbReference type="GO" id="GO:0005576">
    <property type="term" value="C:extracellular region"/>
    <property type="evidence" value="ECO:0007669"/>
    <property type="project" value="UniProtKB-SubCell"/>
</dbReference>
<dbReference type="GO" id="GO:0020002">
    <property type="term" value="C:host cell plasma membrane"/>
    <property type="evidence" value="ECO:0007669"/>
    <property type="project" value="UniProtKB-SubCell"/>
</dbReference>
<dbReference type="GO" id="GO:0016020">
    <property type="term" value="C:membrane"/>
    <property type="evidence" value="ECO:0007669"/>
    <property type="project" value="UniProtKB-KW"/>
</dbReference>
<dbReference type="GO" id="GO:0015485">
    <property type="term" value="F:cholesterol binding"/>
    <property type="evidence" value="ECO:0007669"/>
    <property type="project" value="InterPro"/>
</dbReference>
<dbReference type="GO" id="GO:0090729">
    <property type="term" value="F:toxin activity"/>
    <property type="evidence" value="ECO:0007669"/>
    <property type="project" value="UniProtKB-KW"/>
</dbReference>
<dbReference type="GO" id="GO:0044179">
    <property type="term" value="P:hemolysis in another organism"/>
    <property type="evidence" value="ECO:0000315"/>
    <property type="project" value="CACAO"/>
</dbReference>
<dbReference type="GO" id="GO:0001897">
    <property type="term" value="P:symbiont-mediated cytolysis of host cell"/>
    <property type="evidence" value="ECO:0000269"/>
    <property type="project" value="SigSci"/>
</dbReference>
<dbReference type="FunFam" id="2.60.40.1430:FF:000001">
    <property type="entry name" value="Thiol-activated cytolysin"/>
    <property type="match status" value="1"/>
</dbReference>
<dbReference type="Gene3D" id="3.30.1040.20">
    <property type="match status" value="1"/>
</dbReference>
<dbReference type="Gene3D" id="3.40.30.40">
    <property type="entry name" value="Perfringolysin"/>
    <property type="match status" value="1"/>
</dbReference>
<dbReference type="Gene3D" id="2.60.40.1430">
    <property type="entry name" value="Perfringolysin, domain 4"/>
    <property type="match status" value="1"/>
</dbReference>
<dbReference type="Gene3D" id="3.90.840.10">
    <property type="entry name" value="Thiol-activated cytolysin superfamily/Thiol-activated cytolysin, alpha-beta domain"/>
    <property type="match status" value="1"/>
</dbReference>
<dbReference type="InterPro" id="IPR035390">
    <property type="entry name" value="Thiol_cytolys_C"/>
</dbReference>
<dbReference type="InterPro" id="IPR038700">
    <property type="entry name" value="Thiol_cytolys_C_sf"/>
</dbReference>
<dbReference type="InterPro" id="IPR001869">
    <property type="entry name" value="Thiol_cytolysin"/>
</dbReference>
<dbReference type="InterPro" id="IPR036363">
    <property type="entry name" value="Thiol_cytolysin_ab_sf"/>
</dbReference>
<dbReference type="InterPro" id="IPR036359">
    <property type="entry name" value="Thiol_cytolysin_sf"/>
</dbReference>
<dbReference type="Pfam" id="PF17440">
    <property type="entry name" value="Thiol_cytolys_C"/>
    <property type="match status" value="1"/>
</dbReference>
<dbReference type="Pfam" id="PF01289">
    <property type="entry name" value="Thiol_cytolysin"/>
    <property type="match status" value="1"/>
</dbReference>
<dbReference type="PRINTS" id="PR01400">
    <property type="entry name" value="TACYTOLYSIN"/>
</dbReference>
<dbReference type="SUPFAM" id="SSF56978">
    <property type="entry name" value="Perfringolysin"/>
    <property type="match status" value="1"/>
</dbReference>
<dbReference type="PROSITE" id="PS00481">
    <property type="entry name" value="THIOL_CYTOLYSINS"/>
    <property type="match status" value="1"/>
</dbReference>
<organism>
    <name type="scientific">Clostridium perfringens (strain 13 / Type A)</name>
    <dbReference type="NCBI Taxonomy" id="195102"/>
    <lineage>
        <taxon>Bacteria</taxon>
        <taxon>Bacillati</taxon>
        <taxon>Bacillota</taxon>
        <taxon>Clostridia</taxon>
        <taxon>Eubacteriales</taxon>
        <taxon>Clostridiaceae</taxon>
        <taxon>Clostridium</taxon>
    </lineage>
</organism>
<feature type="signal peptide" evidence="5">
    <location>
        <begin position="1"/>
        <end position="28"/>
    </location>
</feature>
<feature type="chain" id="PRO_0000034104" description="Perfringolysin O">
    <location>
        <begin position="29"/>
        <end position="500"/>
    </location>
</feature>
<feature type="transmembrane region" description="Beta stranded" evidence="1">
    <location>
        <begin position="189"/>
        <end position="202"/>
    </location>
</feature>
<feature type="transmembrane region" description="Beta stranded" evidence="1">
    <location>
        <begin position="209"/>
        <end position="218"/>
    </location>
</feature>
<feature type="transmembrane region" description="Beta stranded" evidence="1">
    <location>
        <begin position="287"/>
        <end position="296"/>
    </location>
</feature>
<feature type="transmembrane region" description="Beta stranded" evidence="1">
    <location>
        <begin position="304"/>
        <end position="316"/>
    </location>
</feature>
<feature type="short sequence motif" description="Conserved undecapeptide" evidence="7">
    <location>
        <begin position="458"/>
        <end position="468"/>
    </location>
</feature>
<feature type="short sequence motif" description="Cholesterol binding" evidence="4">
    <location>
        <begin position="490"/>
        <end position="491"/>
    </location>
</feature>
<feature type="site" description="Important for cholesterol binding" evidence="9">
    <location>
        <position position="459"/>
    </location>
</feature>
<feature type="mutagenesis site" description="Loss of hemolytic activity, loss of host membrane binding, loss of cholesterol binding." evidence="4">
    <original>TL</original>
    <variation>AA</variation>
    <variation>GG</variation>
    <variation>LT</variation>
    <location>
        <begin position="490"/>
        <end position="491"/>
    </location>
</feature>
<feature type="mutagenesis site" description="Loss of hemolytic activity." evidence="4">
    <original>T</original>
    <variation>A</variation>
    <variation>G</variation>
    <variation>S</variation>
    <location>
        <position position="490"/>
    </location>
</feature>
<feature type="mutagenesis site" description="Severely impaired hemolytic activity." evidence="4">
    <original>L</original>
    <variation>A</variation>
    <variation>G</variation>
    <variation>I</variation>
    <variation>V</variation>
    <location>
        <position position="491"/>
    </location>
</feature>
<feature type="sequence conflict" description="In Ref. 3; AA sequence." evidence="7" ref="3">
    <original>D</original>
    <variation>K</variation>
    <location>
        <position position="30"/>
    </location>
</feature>
<feature type="sequence conflict" description="In Ref. 3; AA sequence." evidence="7" ref="3">
    <original>K</original>
    <variation>I</variation>
    <location>
        <position position="34"/>
    </location>
</feature>
<feature type="sequence conflict" description="In Ref. 1; AAA23271." evidence="7" ref="1">
    <original>T</original>
    <variation>A</variation>
    <location>
        <position position="71"/>
    </location>
</feature>
<feature type="helix" evidence="15">
    <location>
        <begin position="38"/>
        <end position="43"/>
    </location>
</feature>
<feature type="turn" evidence="15">
    <location>
        <begin position="49"/>
        <end position="51"/>
    </location>
</feature>
<feature type="strand" evidence="16">
    <location>
        <begin position="52"/>
        <end position="56"/>
    </location>
</feature>
<feature type="strand" evidence="15">
    <location>
        <begin position="65"/>
        <end position="70"/>
    </location>
</feature>
<feature type="strand" evidence="15">
    <location>
        <begin position="72"/>
        <end position="87"/>
    </location>
</feature>
<feature type="strand" evidence="15">
    <location>
        <begin position="90"/>
        <end position="93"/>
    </location>
</feature>
<feature type="turn" evidence="15">
    <location>
        <begin position="97"/>
        <end position="99"/>
    </location>
</feature>
<feature type="strand" evidence="15">
    <location>
        <begin position="107"/>
        <end position="109"/>
    </location>
</feature>
<feature type="helix" evidence="15">
    <location>
        <begin position="112"/>
        <end position="115"/>
    </location>
</feature>
<feature type="strand" evidence="15">
    <location>
        <begin position="129"/>
        <end position="133"/>
    </location>
</feature>
<feature type="strand" evidence="16">
    <location>
        <begin position="139"/>
        <end position="141"/>
    </location>
</feature>
<feature type="strand" evidence="15">
    <location>
        <begin position="143"/>
        <end position="148"/>
    </location>
</feature>
<feature type="helix" evidence="15">
    <location>
        <begin position="151"/>
        <end position="168"/>
    </location>
</feature>
<feature type="turn" evidence="15">
    <location>
        <begin position="169"/>
        <end position="171"/>
    </location>
</feature>
<feature type="strand" evidence="15">
    <location>
        <begin position="174"/>
        <end position="176"/>
    </location>
</feature>
<feature type="strand" evidence="15">
    <location>
        <begin position="178"/>
        <end position="185"/>
    </location>
</feature>
<feature type="helix" evidence="15">
    <location>
        <begin position="189"/>
        <end position="196"/>
    </location>
</feature>
<feature type="helix" evidence="15">
    <location>
        <begin position="200"/>
        <end position="206"/>
    </location>
</feature>
<feature type="helix" evidence="15">
    <location>
        <begin position="211"/>
        <end position="215"/>
    </location>
</feature>
<feature type="strand" evidence="15">
    <location>
        <begin position="218"/>
        <end position="235"/>
    </location>
</feature>
<feature type="helix" evidence="15">
    <location>
        <begin position="241"/>
        <end position="244"/>
    </location>
</feature>
<feature type="helix" evidence="15">
    <location>
        <begin position="251"/>
        <end position="256"/>
    </location>
</feature>
<feature type="strand" evidence="16">
    <location>
        <begin position="260"/>
        <end position="263"/>
    </location>
</feature>
<feature type="strand" evidence="15">
    <location>
        <begin position="265"/>
        <end position="284"/>
    </location>
</feature>
<feature type="helix" evidence="15">
    <location>
        <begin position="290"/>
        <end position="299"/>
    </location>
</feature>
<feature type="helix" evidence="15">
    <location>
        <begin position="302"/>
        <end position="305"/>
    </location>
</feature>
<feature type="helix" evidence="15">
    <location>
        <begin position="307"/>
        <end position="314"/>
    </location>
</feature>
<feature type="strand" evidence="15">
    <location>
        <begin position="316"/>
        <end position="324"/>
    </location>
</feature>
<feature type="turn" evidence="14">
    <location>
        <begin position="328"/>
        <end position="331"/>
    </location>
</feature>
<feature type="strand" evidence="15">
    <location>
        <begin position="333"/>
        <end position="336"/>
    </location>
</feature>
<feature type="helix" evidence="15">
    <location>
        <begin position="338"/>
        <end position="347"/>
    </location>
</feature>
<feature type="strand" evidence="15">
    <location>
        <begin position="350"/>
        <end position="352"/>
    </location>
</feature>
<feature type="strand" evidence="15">
    <location>
        <begin position="359"/>
        <end position="366"/>
    </location>
</feature>
<feature type="turn" evidence="15">
    <location>
        <begin position="367"/>
        <end position="369"/>
    </location>
</feature>
<feature type="strand" evidence="15">
    <location>
        <begin position="377"/>
        <end position="390"/>
    </location>
</feature>
<feature type="strand" evidence="15">
    <location>
        <begin position="392"/>
        <end position="398"/>
    </location>
</feature>
<feature type="strand" evidence="14">
    <location>
        <begin position="400"/>
        <end position="402"/>
    </location>
</feature>
<feature type="strand" evidence="15">
    <location>
        <begin position="404"/>
        <end position="415"/>
    </location>
</feature>
<feature type="strand" evidence="15">
    <location>
        <begin position="421"/>
        <end position="427"/>
    </location>
</feature>
<feature type="turn" evidence="15">
    <location>
        <begin position="429"/>
        <end position="432"/>
    </location>
</feature>
<feature type="strand" evidence="15">
    <location>
        <begin position="437"/>
        <end position="445"/>
    </location>
</feature>
<feature type="strand" evidence="15">
    <location>
        <begin position="449"/>
        <end position="458"/>
    </location>
</feature>
<feature type="strand" evidence="15">
    <location>
        <begin position="461"/>
        <end position="463"/>
    </location>
</feature>
<feature type="helix" evidence="15">
    <location>
        <begin position="464"/>
        <end position="466"/>
    </location>
</feature>
<feature type="strand" evidence="15">
    <location>
        <begin position="469"/>
        <end position="475"/>
    </location>
</feature>
<feature type="strand" evidence="15">
    <location>
        <begin position="480"/>
        <end position="488"/>
    </location>
</feature>
<feature type="strand" evidence="15">
    <location>
        <begin position="490"/>
        <end position="499"/>
    </location>
</feature>
<reference key="1">
    <citation type="journal article" date="1991" name="Infect. Immun.">
        <title>An upstream regulatory sequence stimulates expression of the perfringolysin O gene of Clostridium perfringens.</title>
        <authorList>
            <person name="Shimizu T."/>
            <person name="Okabe A."/>
            <person name="Minami J."/>
            <person name="Hayashi H."/>
        </authorList>
    </citation>
    <scope>NUCLEOTIDE SEQUENCE [GENOMIC DNA]</scope>
</reference>
<reference key="2">
    <citation type="journal article" date="2002" name="Proc. Natl. Acad. Sci. U.S.A.">
        <title>Complete genome sequence of Clostridium perfringens, an anaerobic flesh-eater.</title>
        <authorList>
            <person name="Shimizu T."/>
            <person name="Ohtani K."/>
            <person name="Hirakawa H."/>
            <person name="Ohshima K."/>
            <person name="Yamashita A."/>
            <person name="Shiba T."/>
            <person name="Ogasawara N."/>
            <person name="Hattori M."/>
            <person name="Kuhara S."/>
            <person name="Hayashi H."/>
        </authorList>
    </citation>
    <scope>NUCLEOTIDE SEQUENCE [LARGE SCALE GENOMIC DNA]</scope>
    <source>
        <strain>13 / Type A</strain>
    </source>
</reference>
<reference key="3">
    <citation type="journal article" date="1986" name="Biochemistry">
        <title>Cold-labile hemolysin produced by limited proteolysis of theta-toxin from Clostridium perfringens.</title>
        <authorList>
            <person name="Ohno-Iwashita Y."/>
            <person name="Iwamoto M."/>
            <person name="Mitsui K."/>
            <person name="Kawasaki H."/>
            <person name="Ando S."/>
        </authorList>
    </citation>
    <scope>PROTEIN SEQUENCE OF 29-45 AND 305-312</scope>
    <scope>SUBCELLULAR LOCATION</scope>
    <source>
        <strain>ATCC 10543 / DSM 798 / NCIB 8875 / BP6K / Type A</strain>
    </source>
</reference>
<reference key="4">
    <citation type="journal article" date="1987" name="Eur. J. Biochem.">
        <title>Role of the essential thiol group in the thiol-activated cytolysin from Clostridium perfringens.</title>
        <authorList>
            <person name="Iwamoto M."/>
            <person name="Ohno-Iwashita Y."/>
            <person name="Ando S."/>
        </authorList>
    </citation>
    <scope>IMPORTANCE OF THIOL-GROUP IN CHOLESTEROL BINDING</scope>
</reference>
<reference key="5">
    <citation type="journal article" date="2010" name="Proc. Natl. Acad. Sci. U.S.A.">
        <title>Only two amino acids are essential for cytolytic toxin recognition of cholesterol at the membrane surface.</title>
        <authorList>
            <person name="Farrand A.J."/>
            <person name="LaChapelle S."/>
            <person name="Hotze E.M."/>
            <person name="Johnson A.E."/>
            <person name="Tweten R.K."/>
        </authorList>
    </citation>
    <scope>FUNCTION</scope>
    <scope>CHOLESTEROL-BINDING</scope>
    <scope>MUTAGENESIS OF 490-THR-LEU-491; THR-490 AND LEU-491</scope>
</reference>
<reference key="6">
    <citation type="journal article" date="1996" name="FEBS Lett.">
        <title>Crystallization and preliminary X-ray analysis of a thiol-activated cytolysin.</title>
        <authorList>
            <person name="Feil S.C."/>
            <person name="Rossjohn J."/>
            <person name="Rohde K."/>
            <person name="Tweten R.K."/>
            <person name="Parker M.W."/>
        </authorList>
    </citation>
    <scope>X-RAY CRYSTALLOGRAPHY (2.4 ANGSTROMS)</scope>
</reference>
<reference evidence="11" key="7">
    <citation type="journal article" date="1997" name="Cell">
        <title>Structure of a cholesterol-binding, thiol-activated cytolysin and a model of its membrane form.</title>
        <authorList>
            <person name="Rossjohn J."/>
            <person name="Feil S.C."/>
            <person name="McKinstry W.J."/>
            <person name="Tweten R.K."/>
            <person name="Parker M.W."/>
        </authorList>
    </citation>
    <scope>X-RAY CRYSTALLOGRAPHY (2.2 ANGSTROMS)</scope>
    <scope>DOMAIN</scope>
</reference>
<reference evidence="12 13" key="8">
    <citation type="journal article" date="2005" name="Cell">
        <title>Structural basis of pore formation by the bacterial toxin pneumolysin.</title>
        <authorList>
            <person name="Tilley S.J."/>
            <person name="Orlova E.V."/>
            <person name="Gilbert R.J."/>
            <person name="Andrew P.W."/>
            <person name="Saibil H.R."/>
        </authorList>
    </citation>
    <scope>STRUCTURE BY ELECTRON MICROSCOPY (28.00 ANGSTROMS) OF 36-500 (PREPORE)</scope>
    <scope>STRUCTURE BY ELECTRON MICROSCOPY (29.00 ANGSTROMS) OF 36-500 (PORE)</scope>
    <scope>SUBUNIT</scope>
    <scope>DOMAIN</scope>
</reference>
<reference evidence="10 11" key="9">
    <citation type="journal article" date="2007" name="J. Mol. Biol.">
        <title>Structures of perfringolysin O suggest a pathway for activation of cholesterol-dependent cytolysins.</title>
        <authorList>
            <person name="Rossjohn J."/>
            <person name="Polekhina G."/>
            <person name="Feil S.C."/>
            <person name="Morton C.J."/>
            <person name="Tweten R.K."/>
            <person name="Parker M.W."/>
        </authorList>
    </citation>
    <scope>X-RAY CRYSTALLOGRAPHY (2.9 ANGSTROMS) OF 30-500</scope>
    <scope>FUNCTION</scope>
</reference>
<keyword id="KW-0002">3D-structure</keyword>
<keyword id="KW-0204">Cytolysis</keyword>
<keyword id="KW-0903">Direct protein sequencing</keyword>
<keyword id="KW-0354">Hemolysis</keyword>
<keyword id="KW-1032">Host cell membrane</keyword>
<keyword id="KW-1043">Host membrane</keyword>
<keyword id="KW-0446">Lipid-binding</keyword>
<keyword id="KW-0472">Membrane</keyword>
<keyword id="KW-1185">Reference proteome</keyword>
<keyword id="KW-0964">Secreted</keyword>
<keyword id="KW-0732">Signal</keyword>
<keyword id="KW-0800">Toxin</keyword>
<keyword id="KW-0812">Transmembrane</keyword>
<keyword id="KW-1134">Transmembrane beta strand</keyword>
<keyword id="KW-0843">Virulence</keyword>
<name>TACY_CLOPE</name>